<feature type="chain" id="PRO_0000099748" description="MF7 protein">
    <location>
        <begin position="1"/>
        <end position="148"/>
    </location>
</feature>
<sequence length="148" mass="17109">MDHGKYLLTIFLNDDDSFFKYLAAQEDDVAMSDVHTIVDYLNFLLALLIKSKDKLEAVGYYYAPLSEEYKAVFDFTDTKSLKQLFNKQPVYVESDSPICVDKGYLADFVLATTRLKKQLPLVLDKEVTYVDPYKDKRFANILSILHKN</sequence>
<keyword id="KW-1185">Reference proteome</keyword>
<protein>
    <recommendedName>
        <fullName>MF7 protein</fullName>
    </recommendedName>
</protein>
<proteinExistence type="predicted"/>
<name>VMF7_MYXVL</name>
<reference key="1">
    <citation type="journal article" date="1999" name="Virology">
        <title>The complete DNA sequence of myxoma virus.</title>
        <authorList>
            <person name="Cameron C."/>
            <person name="Hota-Mitchell S."/>
            <person name="Chen L."/>
            <person name="Barrett J.W."/>
            <person name="Cao J.-X."/>
            <person name="Macaulay C."/>
            <person name="Willer D.O."/>
            <person name="Evans D.H."/>
            <person name="McFadden G."/>
        </authorList>
    </citation>
    <scope>NUCLEOTIDE SEQUENCE [LARGE SCALE GENOMIC DNA]</scope>
</reference>
<organism>
    <name type="scientific">Myxoma virus (strain Lausanne)</name>
    <name type="common">MYXV</name>
    <dbReference type="NCBI Taxonomy" id="31530"/>
    <lineage>
        <taxon>Viruses</taxon>
        <taxon>Varidnaviria</taxon>
        <taxon>Bamfordvirae</taxon>
        <taxon>Nucleocytoviricota</taxon>
        <taxon>Pokkesviricetes</taxon>
        <taxon>Chitovirales</taxon>
        <taxon>Poxviridae</taxon>
        <taxon>Chordopoxvirinae</taxon>
        <taxon>Leporipoxvirus</taxon>
        <taxon>Myxoma virus</taxon>
    </lineage>
</organism>
<dbReference type="EMBL" id="AF170726">
    <property type="protein sequence ID" value="AAF14948.1"/>
    <property type="molecule type" value="Genomic_DNA"/>
</dbReference>
<dbReference type="RefSeq" id="NP_051774.1">
    <property type="nucleotide sequence ID" value="NC_001132.2"/>
</dbReference>
<dbReference type="GeneID" id="932188"/>
<dbReference type="KEGG" id="vg:932188"/>
<dbReference type="Proteomes" id="UP000000867">
    <property type="component" value="Segment"/>
</dbReference>
<dbReference type="InterPro" id="IPR005006">
    <property type="entry name" value="Poxvirus_J1"/>
</dbReference>
<dbReference type="Pfam" id="PF03338">
    <property type="entry name" value="Pox_J1"/>
    <property type="match status" value="1"/>
</dbReference>
<organismHost>
    <name type="scientific">Oryctolagus cuniculus</name>
    <name type="common">Rabbit</name>
    <dbReference type="NCBI Taxonomy" id="9986"/>
</organismHost>
<accession>P68561</accession>
<accession>P28849</accession>
<gene>
    <name type="ordered locus">m060R</name>
</gene>